<name>TRUB_RICRO</name>
<reference key="1">
    <citation type="journal article" date="2008" name="Infect. Immun.">
        <title>Genomic comparison of virulent Rickettsia rickettsii Sheila Smith and avirulent Rickettsia rickettsii Iowa.</title>
        <authorList>
            <person name="Ellison D.W."/>
            <person name="Clark T.R."/>
            <person name="Sturdevant D.E."/>
            <person name="Virtaneva K."/>
            <person name="Porcella S.F."/>
            <person name="Hackstadt T."/>
        </authorList>
    </citation>
    <scope>NUCLEOTIDE SEQUENCE [LARGE SCALE GENOMIC DNA]</scope>
    <source>
        <strain>Iowa</strain>
    </source>
</reference>
<feature type="chain" id="PRO_1000084662" description="tRNA pseudouridine synthase B">
    <location>
        <begin position="1"/>
        <end position="345"/>
    </location>
</feature>
<feature type="active site" description="Nucleophile" evidence="1">
    <location>
        <position position="39"/>
    </location>
</feature>
<sequence length="345" mass="38754">MSNYWLNIYKPRGISSAQLVSIVKKILGKTKIGHAGTLDVEAEGILPFAVGEATKLIRLLIDARKTYIFTVKFGMQTNSGDCAGKVIATKDCVPSQEEAYAVCSKFIGSVTQIPPAFSALKVNGVRAYKLAREEKKVELKPRNITIYDLKCLNFDEKNATATYYTECSKGTYIRTLAEDLALSLQSLGFVIELRRTQVGIFKEENAIRIKSPDEITKNALEAKSIKIEAILDDILVLDATDSQAQQIKYGQKCLFNYEKDFRHLAKFAYREEFKGNTERSTTAYTLVREDASTGLTYKLPLEVEFGKMSIDLLWVRYKGTLLAIGSLNKSCFNSLRVFNLTQDFF</sequence>
<protein>
    <recommendedName>
        <fullName evidence="1">tRNA pseudouridine synthase B</fullName>
        <ecNumber evidence="1">5.4.99.25</ecNumber>
    </recommendedName>
    <alternativeName>
        <fullName evidence="1">tRNA pseudouridine(55) synthase</fullName>
        <shortName evidence="1">Psi55 synthase</shortName>
    </alternativeName>
    <alternativeName>
        <fullName evidence="1">tRNA pseudouridylate synthase</fullName>
    </alternativeName>
    <alternativeName>
        <fullName evidence="1">tRNA-uridine isomerase</fullName>
    </alternativeName>
</protein>
<gene>
    <name evidence="1" type="primary">truB</name>
    <name type="ordered locus">RrIowa_0795</name>
</gene>
<organism>
    <name type="scientific">Rickettsia rickettsii (strain Iowa)</name>
    <dbReference type="NCBI Taxonomy" id="452659"/>
    <lineage>
        <taxon>Bacteria</taxon>
        <taxon>Pseudomonadati</taxon>
        <taxon>Pseudomonadota</taxon>
        <taxon>Alphaproteobacteria</taxon>
        <taxon>Rickettsiales</taxon>
        <taxon>Rickettsiaceae</taxon>
        <taxon>Rickettsieae</taxon>
        <taxon>Rickettsia</taxon>
        <taxon>spotted fever group</taxon>
    </lineage>
</organism>
<dbReference type="EC" id="5.4.99.25" evidence="1"/>
<dbReference type="EMBL" id="CP000766">
    <property type="protein sequence ID" value="ABY72638.1"/>
    <property type="molecule type" value="Genomic_DNA"/>
</dbReference>
<dbReference type="RefSeq" id="WP_012150854.1">
    <property type="nucleotide sequence ID" value="NC_010263.3"/>
</dbReference>
<dbReference type="SMR" id="B0BXR2"/>
<dbReference type="GeneID" id="79937402"/>
<dbReference type="KEGG" id="rrj:RrIowa_0795"/>
<dbReference type="eggNOG" id="COG0130">
    <property type="taxonomic scope" value="Bacteria"/>
</dbReference>
<dbReference type="eggNOG" id="COG1565">
    <property type="taxonomic scope" value="Bacteria"/>
</dbReference>
<dbReference type="HOGENOM" id="CLU_032087_0_3_5"/>
<dbReference type="Proteomes" id="UP000000796">
    <property type="component" value="Chromosome"/>
</dbReference>
<dbReference type="GO" id="GO:0003723">
    <property type="term" value="F:RNA binding"/>
    <property type="evidence" value="ECO:0007669"/>
    <property type="project" value="InterPro"/>
</dbReference>
<dbReference type="GO" id="GO:0160148">
    <property type="term" value="F:tRNA pseudouridine(55) synthase activity"/>
    <property type="evidence" value="ECO:0007669"/>
    <property type="project" value="UniProtKB-EC"/>
</dbReference>
<dbReference type="GO" id="GO:1990481">
    <property type="term" value="P:mRNA pseudouridine synthesis"/>
    <property type="evidence" value="ECO:0007669"/>
    <property type="project" value="TreeGrafter"/>
</dbReference>
<dbReference type="GO" id="GO:0031119">
    <property type="term" value="P:tRNA pseudouridine synthesis"/>
    <property type="evidence" value="ECO:0007669"/>
    <property type="project" value="UniProtKB-UniRule"/>
</dbReference>
<dbReference type="CDD" id="cd02573">
    <property type="entry name" value="PseudoU_synth_EcTruB"/>
    <property type="match status" value="1"/>
</dbReference>
<dbReference type="Gene3D" id="3.30.2350.10">
    <property type="entry name" value="Pseudouridine synthase"/>
    <property type="match status" value="1"/>
</dbReference>
<dbReference type="HAMAP" id="MF_01080">
    <property type="entry name" value="TruB_bact"/>
    <property type="match status" value="1"/>
</dbReference>
<dbReference type="InterPro" id="IPR020103">
    <property type="entry name" value="PsdUridine_synth_cat_dom_sf"/>
</dbReference>
<dbReference type="InterPro" id="IPR002501">
    <property type="entry name" value="PsdUridine_synth_N"/>
</dbReference>
<dbReference type="InterPro" id="IPR005728">
    <property type="entry name" value="RPE1"/>
</dbReference>
<dbReference type="InterPro" id="IPR014780">
    <property type="entry name" value="tRNA_psdUridine_synth_TruB"/>
</dbReference>
<dbReference type="InterPro" id="IPR032819">
    <property type="entry name" value="TruB_C"/>
</dbReference>
<dbReference type="NCBIfam" id="TIGR01045">
    <property type="entry name" value="RPE1"/>
    <property type="match status" value="1"/>
</dbReference>
<dbReference type="NCBIfam" id="TIGR00431">
    <property type="entry name" value="TruB"/>
    <property type="match status" value="1"/>
</dbReference>
<dbReference type="PANTHER" id="PTHR13767:SF2">
    <property type="entry name" value="PSEUDOURIDYLATE SYNTHASE TRUB1"/>
    <property type="match status" value="1"/>
</dbReference>
<dbReference type="PANTHER" id="PTHR13767">
    <property type="entry name" value="TRNA-PSEUDOURIDINE SYNTHASE"/>
    <property type="match status" value="1"/>
</dbReference>
<dbReference type="Pfam" id="PF16198">
    <property type="entry name" value="TruB_C_2"/>
    <property type="match status" value="1"/>
</dbReference>
<dbReference type="Pfam" id="PF01509">
    <property type="entry name" value="TruB_N"/>
    <property type="match status" value="1"/>
</dbReference>
<dbReference type="SUPFAM" id="SSF55120">
    <property type="entry name" value="Pseudouridine synthase"/>
    <property type="match status" value="1"/>
</dbReference>
<evidence type="ECO:0000255" key="1">
    <source>
        <dbReference type="HAMAP-Rule" id="MF_01080"/>
    </source>
</evidence>
<comment type="function">
    <text evidence="1">Responsible for synthesis of pseudouridine from uracil-55 in the psi GC loop of transfer RNAs.</text>
</comment>
<comment type="catalytic activity">
    <reaction evidence="1">
        <text>uridine(55) in tRNA = pseudouridine(55) in tRNA</text>
        <dbReference type="Rhea" id="RHEA:42532"/>
        <dbReference type="Rhea" id="RHEA-COMP:10101"/>
        <dbReference type="Rhea" id="RHEA-COMP:10102"/>
        <dbReference type="ChEBI" id="CHEBI:65314"/>
        <dbReference type="ChEBI" id="CHEBI:65315"/>
        <dbReference type="EC" id="5.4.99.25"/>
    </reaction>
</comment>
<comment type="similarity">
    <text evidence="1">Belongs to the pseudouridine synthase TruB family. Type 1 subfamily.</text>
</comment>
<proteinExistence type="inferred from homology"/>
<keyword id="KW-0413">Isomerase</keyword>
<keyword id="KW-0819">tRNA processing</keyword>
<accession>B0BXR2</accession>